<dbReference type="EMBL" id="CP000378">
    <property type="protein sequence ID" value="ABF77848.1"/>
    <property type="molecule type" value="Genomic_DNA"/>
</dbReference>
<dbReference type="SMR" id="Q1BRA7"/>
<dbReference type="HOGENOM" id="CLU_085114_3_0_4"/>
<dbReference type="GO" id="GO:0005886">
    <property type="term" value="C:plasma membrane"/>
    <property type="evidence" value="ECO:0007669"/>
    <property type="project" value="UniProtKB-SubCell"/>
</dbReference>
<dbReference type="GO" id="GO:0045259">
    <property type="term" value="C:proton-transporting ATP synthase complex"/>
    <property type="evidence" value="ECO:0007669"/>
    <property type="project" value="UniProtKB-KW"/>
</dbReference>
<dbReference type="GO" id="GO:0046933">
    <property type="term" value="F:proton-transporting ATP synthase activity, rotational mechanism"/>
    <property type="evidence" value="ECO:0007669"/>
    <property type="project" value="UniProtKB-UniRule"/>
</dbReference>
<dbReference type="Gene3D" id="1.10.520.20">
    <property type="entry name" value="N-terminal domain of the delta subunit of the F1F0-ATP synthase"/>
    <property type="match status" value="1"/>
</dbReference>
<dbReference type="HAMAP" id="MF_01416">
    <property type="entry name" value="ATP_synth_delta_bact"/>
    <property type="match status" value="1"/>
</dbReference>
<dbReference type="InterPro" id="IPR026015">
    <property type="entry name" value="ATP_synth_OSCP/delta_N_sf"/>
</dbReference>
<dbReference type="InterPro" id="IPR000711">
    <property type="entry name" value="ATPase_OSCP/dsu"/>
</dbReference>
<dbReference type="NCBIfam" id="TIGR01145">
    <property type="entry name" value="ATP_synt_delta"/>
    <property type="match status" value="1"/>
</dbReference>
<dbReference type="NCBIfam" id="NF004402">
    <property type="entry name" value="PRK05758.2-2"/>
    <property type="match status" value="1"/>
</dbReference>
<dbReference type="PANTHER" id="PTHR11910">
    <property type="entry name" value="ATP SYNTHASE DELTA CHAIN"/>
    <property type="match status" value="1"/>
</dbReference>
<dbReference type="Pfam" id="PF00213">
    <property type="entry name" value="OSCP"/>
    <property type="match status" value="1"/>
</dbReference>
<dbReference type="PRINTS" id="PR00125">
    <property type="entry name" value="ATPASEDELTA"/>
</dbReference>
<dbReference type="SUPFAM" id="SSF47928">
    <property type="entry name" value="N-terminal domain of the delta subunit of the F1F0-ATP synthase"/>
    <property type="match status" value="1"/>
</dbReference>
<name>ATPD_BURO1</name>
<proteinExistence type="inferred from homology"/>
<evidence type="ECO:0000255" key="1">
    <source>
        <dbReference type="HAMAP-Rule" id="MF_01416"/>
    </source>
</evidence>
<gene>
    <name evidence="1" type="primary">atpH</name>
    <name type="ordered locus">Bcen_2952</name>
</gene>
<protein>
    <recommendedName>
        <fullName evidence="1">ATP synthase subunit delta</fullName>
    </recommendedName>
    <alternativeName>
        <fullName evidence="1">ATP synthase F(1) sector subunit delta</fullName>
    </alternativeName>
    <alternativeName>
        <fullName evidence="1">F-type ATPase subunit delta</fullName>
        <shortName evidence="1">F-ATPase subunit delta</shortName>
    </alternativeName>
</protein>
<accession>Q1BRA7</accession>
<feature type="chain" id="PRO_0000370917" description="ATP synthase subunit delta">
    <location>
        <begin position="1"/>
        <end position="179"/>
    </location>
</feature>
<reference key="1">
    <citation type="submission" date="2006-05" db="EMBL/GenBank/DDBJ databases">
        <title>Complete sequence of chromosome 1 of Burkholderia cenocepacia AU 1054.</title>
        <authorList>
            <consortium name="US DOE Joint Genome Institute"/>
            <person name="Copeland A."/>
            <person name="Lucas S."/>
            <person name="Lapidus A."/>
            <person name="Barry K."/>
            <person name="Detter J.C."/>
            <person name="Glavina del Rio T."/>
            <person name="Hammon N."/>
            <person name="Israni S."/>
            <person name="Dalin E."/>
            <person name="Tice H."/>
            <person name="Pitluck S."/>
            <person name="Chain P."/>
            <person name="Malfatti S."/>
            <person name="Shin M."/>
            <person name="Vergez L."/>
            <person name="Schmutz J."/>
            <person name="Larimer F."/>
            <person name="Land M."/>
            <person name="Hauser L."/>
            <person name="Kyrpides N."/>
            <person name="Lykidis A."/>
            <person name="LiPuma J.J."/>
            <person name="Konstantinidis K."/>
            <person name="Tiedje J.M."/>
            <person name="Richardson P."/>
        </authorList>
    </citation>
    <scope>NUCLEOTIDE SEQUENCE [LARGE SCALE GENOMIC DNA]</scope>
    <source>
        <strain>AU 1054</strain>
    </source>
</reference>
<sequence>MAELATIARPYAEALFRVAEGGDIAAWSTLVQELAQVARLPEVLSVASSPKVTRTQVAELLLAAVKSPVAAGAEAKNFVQMLVDNHRIALLPEIAEQFEALKNEREGAADAEIVSAFPLNGADLDSLVSGLERKFKRKLKPTVEVDSSLIGGVRVTVGDEVLDTSVRARLASMQAALTA</sequence>
<organism>
    <name type="scientific">Burkholderia orbicola (strain AU 1054)</name>
    <dbReference type="NCBI Taxonomy" id="331271"/>
    <lineage>
        <taxon>Bacteria</taxon>
        <taxon>Pseudomonadati</taxon>
        <taxon>Pseudomonadota</taxon>
        <taxon>Betaproteobacteria</taxon>
        <taxon>Burkholderiales</taxon>
        <taxon>Burkholderiaceae</taxon>
        <taxon>Burkholderia</taxon>
        <taxon>Burkholderia cepacia complex</taxon>
        <taxon>Burkholderia orbicola</taxon>
    </lineage>
</organism>
<keyword id="KW-0066">ATP synthesis</keyword>
<keyword id="KW-0997">Cell inner membrane</keyword>
<keyword id="KW-1003">Cell membrane</keyword>
<keyword id="KW-0139">CF(1)</keyword>
<keyword id="KW-0375">Hydrogen ion transport</keyword>
<keyword id="KW-0406">Ion transport</keyword>
<keyword id="KW-0472">Membrane</keyword>
<keyword id="KW-0813">Transport</keyword>
<comment type="function">
    <text evidence="1">F(1)F(0) ATP synthase produces ATP from ADP in the presence of a proton or sodium gradient. F-type ATPases consist of two structural domains, F(1) containing the extramembraneous catalytic core and F(0) containing the membrane proton channel, linked together by a central stalk and a peripheral stalk. During catalysis, ATP synthesis in the catalytic domain of F(1) is coupled via a rotary mechanism of the central stalk subunits to proton translocation.</text>
</comment>
<comment type="function">
    <text evidence="1">This protein is part of the stalk that links CF(0) to CF(1). It either transmits conformational changes from CF(0) to CF(1) or is implicated in proton conduction.</text>
</comment>
<comment type="subunit">
    <text evidence="1">F-type ATPases have 2 components, F(1) - the catalytic core - and F(0) - the membrane proton channel. F(1) has five subunits: alpha(3), beta(3), gamma(1), delta(1), epsilon(1). F(0) has three main subunits: a(1), b(2) and c(10-14). The alpha and beta chains form an alternating ring which encloses part of the gamma chain. F(1) is attached to F(0) by a central stalk formed by the gamma and epsilon chains, while a peripheral stalk is formed by the delta and b chains.</text>
</comment>
<comment type="subcellular location">
    <subcellularLocation>
        <location evidence="1">Cell inner membrane</location>
        <topology evidence="1">Peripheral membrane protein</topology>
    </subcellularLocation>
</comment>
<comment type="similarity">
    <text evidence="1">Belongs to the ATPase delta chain family.</text>
</comment>